<accession>Q32JU9</accession>
<evidence type="ECO:0000255" key="1">
    <source>
        <dbReference type="HAMAP-Rule" id="MF_01684"/>
    </source>
</evidence>
<comment type="function">
    <text evidence="1">Catalyzes the irreversible cleavage of the glycosidic bond in both 5'-methylthioadenosine (MTA) and S-adenosylhomocysteine (SAH/AdoHcy) to adenine and the corresponding thioribose, 5'-methylthioribose and S-ribosylhomocysteine, respectively. Also cleaves 5'-deoxyadenosine, a toxic by-product of radical S-adenosylmethionine (SAM) enzymes, into 5-deoxyribose and adenine. Thus, is required for in vivo function of the radical SAM enzymes biotin synthase and lipoic acid synthase, that are inhibited by 5'-deoxyadenosine accumulation.</text>
</comment>
<comment type="catalytic activity">
    <reaction evidence="1">
        <text>S-adenosyl-L-homocysteine + H2O = S-(5-deoxy-D-ribos-5-yl)-L-homocysteine + adenine</text>
        <dbReference type="Rhea" id="RHEA:17805"/>
        <dbReference type="ChEBI" id="CHEBI:15377"/>
        <dbReference type="ChEBI" id="CHEBI:16708"/>
        <dbReference type="ChEBI" id="CHEBI:57856"/>
        <dbReference type="ChEBI" id="CHEBI:58195"/>
        <dbReference type="EC" id="3.2.2.9"/>
    </reaction>
</comment>
<comment type="catalytic activity">
    <reaction evidence="1">
        <text>S-methyl-5'-thioadenosine + H2O = 5-(methylsulfanyl)-D-ribose + adenine</text>
        <dbReference type="Rhea" id="RHEA:13617"/>
        <dbReference type="ChEBI" id="CHEBI:15377"/>
        <dbReference type="ChEBI" id="CHEBI:16708"/>
        <dbReference type="ChEBI" id="CHEBI:17509"/>
        <dbReference type="ChEBI" id="CHEBI:78440"/>
        <dbReference type="EC" id="3.2.2.9"/>
    </reaction>
</comment>
<comment type="catalytic activity">
    <reaction evidence="1">
        <text>5'-deoxyadenosine + H2O = 5-deoxy-D-ribose + adenine</text>
        <dbReference type="Rhea" id="RHEA:29859"/>
        <dbReference type="ChEBI" id="CHEBI:15377"/>
        <dbReference type="ChEBI" id="CHEBI:16708"/>
        <dbReference type="ChEBI" id="CHEBI:17319"/>
        <dbReference type="ChEBI" id="CHEBI:149540"/>
        <dbReference type="EC" id="3.2.2.9"/>
    </reaction>
    <physiologicalReaction direction="left-to-right" evidence="1">
        <dbReference type="Rhea" id="RHEA:29860"/>
    </physiologicalReaction>
</comment>
<comment type="pathway">
    <text evidence="1">Amino-acid biosynthesis; L-methionine biosynthesis via salvage pathway; S-methyl-5-thio-alpha-D-ribose 1-phosphate from S-methyl-5'-thioadenosine (hydrolase route): step 1/2.</text>
</comment>
<comment type="subunit">
    <text evidence="1">Homodimer.</text>
</comment>
<comment type="similarity">
    <text evidence="1">Belongs to the PNP/UDP phosphorylase family. MtnN subfamily.</text>
</comment>
<feature type="chain" id="PRO_0000359358" description="5'-methylthioadenosine/S-adenosylhomocysteine nucleosidase">
    <location>
        <begin position="1"/>
        <end position="232"/>
    </location>
</feature>
<feature type="active site" description="Proton acceptor" evidence="1">
    <location>
        <position position="12"/>
    </location>
</feature>
<feature type="active site" description="Proton donor" evidence="1">
    <location>
        <position position="197"/>
    </location>
</feature>
<feature type="binding site" evidence="1">
    <location>
        <position position="78"/>
    </location>
    <ligand>
        <name>substrate</name>
    </ligand>
</feature>
<feature type="binding site" evidence="1">
    <location>
        <position position="152"/>
    </location>
    <ligand>
        <name>substrate</name>
    </ligand>
</feature>
<feature type="binding site" evidence="1">
    <location>
        <begin position="173"/>
        <end position="174"/>
    </location>
    <ligand>
        <name>substrate</name>
    </ligand>
</feature>
<reference key="1">
    <citation type="journal article" date="2005" name="Nucleic Acids Res.">
        <title>Genome dynamics and diversity of Shigella species, the etiologic agents of bacillary dysentery.</title>
        <authorList>
            <person name="Yang F."/>
            <person name="Yang J."/>
            <person name="Zhang X."/>
            <person name="Chen L."/>
            <person name="Jiang Y."/>
            <person name="Yan Y."/>
            <person name="Tang X."/>
            <person name="Wang J."/>
            <person name="Xiong Z."/>
            <person name="Dong J."/>
            <person name="Xue Y."/>
            <person name="Zhu Y."/>
            <person name="Xu X."/>
            <person name="Sun L."/>
            <person name="Chen S."/>
            <person name="Nie H."/>
            <person name="Peng J."/>
            <person name="Xu J."/>
            <person name="Wang Y."/>
            <person name="Yuan Z."/>
            <person name="Wen Y."/>
            <person name="Yao Z."/>
            <person name="Shen Y."/>
            <person name="Qiang B."/>
            <person name="Hou Y."/>
            <person name="Yu J."/>
            <person name="Jin Q."/>
        </authorList>
    </citation>
    <scope>NUCLEOTIDE SEQUENCE [LARGE SCALE GENOMIC DNA]</scope>
    <source>
        <strain>Sd197</strain>
    </source>
</reference>
<organism>
    <name type="scientific">Shigella dysenteriae serotype 1 (strain Sd197)</name>
    <dbReference type="NCBI Taxonomy" id="300267"/>
    <lineage>
        <taxon>Bacteria</taxon>
        <taxon>Pseudomonadati</taxon>
        <taxon>Pseudomonadota</taxon>
        <taxon>Gammaproteobacteria</taxon>
        <taxon>Enterobacterales</taxon>
        <taxon>Enterobacteriaceae</taxon>
        <taxon>Shigella</taxon>
    </lineage>
</organism>
<sequence>MKIGIIGAMEEEVTLLRDKIENRQTISLGGCEIYTGQLNGTEVALLKSGIGKVAAALGATLLLEHCKPDVIINTGSAGGLAPTLKVGDIVVSDEARYHDADVTAFGYEYGQLPGCPAGFKADDKLIAAAEACIAELNLNAVRGLIVSGDAFINGSVGLAKIRHNFPQAIAVEMEATAIAHVCHNFNVPFVVVRAISDVADQQSHLSFDEFLAVAAKQSSLMVESLVQKLAHG</sequence>
<proteinExistence type="inferred from homology"/>
<dbReference type="EC" id="3.2.2.9" evidence="1"/>
<dbReference type="EMBL" id="CP000034">
    <property type="protein sequence ID" value="ABB60408.1"/>
    <property type="molecule type" value="Genomic_DNA"/>
</dbReference>
<dbReference type="RefSeq" id="WP_000689844.1">
    <property type="nucleotide sequence ID" value="NC_007606.1"/>
</dbReference>
<dbReference type="RefSeq" id="YP_401897.1">
    <property type="nucleotide sequence ID" value="NC_007606.1"/>
</dbReference>
<dbReference type="SMR" id="Q32JU9"/>
<dbReference type="STRING" id="300267.SDY_0175"/>
<dbReference type="EnsemblBacteria" id="ABB60408">
    <property type="protein sequence ID" value="ABB60408"/>
    <property type="gene ID" value="SDY_0175"/>
</dbReference>
<dbReference type="GeneID" id="93777267"/>
<dbReference type="KEGG" id="sdy:SDY_0175"/>
<dbReference type="PATRIC" id="fig|300267.13.peg.201"/>
<dbReference type="HOGENOM" id="CLU_031248_2_2_6"/>
<dbReference type="UniPathway" id="UPA00904">
    <property type="reaction ID" value="UER00871"/>
</dbReference>
<dbReference type="Proteomes" id="UP000002716">
    <property type="component" value="Chromosome"/>
</dbReference>
<dbReference type="GO" id="GO:0005829">
    <property type="term" value="C:cytosol"/>
    <property type="evidence" value="ECO:0007669"/>
    <property type="project" value="TreeGrafter"/>
</dbReference>
<dbReference type="GO" id="GO:0008782">
    <property type="term" value="F:adenosylhomocysteine nucleosidase activity"/>
    <property type="evidence" value="ECO:0007669"/>
    <property type="project" value="UniProtKB-UniRule"/>
</dbReference>
<dbReference type="GO" id="GO:0008930">
    <property type="term" value="F:methylthioadenosine nucleosidase activity"/>
    <property type="evidence" value="ECO:0007669"/>
    <property type="project" value="UniProtKB-UniRule"/>
</dbReference>
<dbReference type="GO" id="GO:0019509">
    <property type="term" value="P:L-methionine salvage from methylthioadenosine"/>
    <property type="evidence" value="ECO:0007669"/>
    <property type="project" value="UniProtKB-UniRule"/>
</dbReference>
<dbReference type="GO" id="GO:0019284">
    <property type="term" value="P:L-methionine salvage from S-adenosylmethionine"/>
    <property type="evidence" value="ECO:0007669"/>
    <property type="project" value="TreeGrafter"/>
</dbReference>
<dbReference type="GO" id="GO:0046124">
    <property type="term" value="P:purine deoxyribonucleoside catabolic process"/>
    <property type="evidence" value="ECO:0007669"/>
    <property type="project" value="UniProtKB-UniRule"/>
</dbReference>
<dbReference type="CDD" id="cd09008">
    <property type="entry name" value="MTAN"/>
    <property type="match status" value="1"/>
</dbReference>
<dbReference type="FunFam" id="3.40.50.1580:FF:000001">
    <property type="entry name" value="MTA/SAH nucleosidase family protein"/>
    <property type="match status" value="1"/>
</dbReference>
<dbReference type="Gene3D" id="3.40.50.1580">
    <property type="entry name" value="Nucleoside phosphorylase domain"/>
    <property type="match status" value="1"/>
</dbReference>
<dbReference type="HAMAP" id="MF_01684">
    <property type="entry name" value="Salvage_MtnN"/>
    <property type="match status" value="1"/>
</dbReference>
<dbReference type="InterPro" id="IPR010049">
    <property type="entry name" value="MTA_SAH_Nsdase"/>
</dbReference>
<dbReference type="InterPro" id="IPR000845">
    <property type="entry name" value="Nucleoside_phosphorylase_d"/>
</dbReference>
<dbReference type="InterPro" id="IPR035994">
    <property type="entry name" value="Nucleoside_phosphorylase_sf"/>
</dbReference>
<dbReference type="NCBIfam" id="TIGR01704">
    <property type="entry name" value="MTA_SAH-Nsdase"/>
    <property type="match status" value="1"/>
</dbReference>
<dbReference type="NCBIfam" id="NF004079">
    <property type="entry name" value="PRK05584.1"/>
    <property type="match status" value="1"/>
</dbReference>
<dbReference type="PANTHER" id="PTHR46832">
    <property type="entry name" value="5'-METHYLTHIOADENOSINE/S-ADENOSYLHOMOCYSTEINE NUCLEOSIDASE"/>
    <property type="match status" value="1"/>
</dbReference>
<dbReference type="PANTHER" id="PTHR46832:SF1">
    <property type="entry name" value="5'-METHYLTHIOADENOSINE_S-ADENOSYLHOMOCYSTEINE NUCLEOSIDASE"/>
    <property type="match status" value="1"/>
</dbReference>
<dbReference type="Pfam" id="PF01048">
    <property type="entry name" value="PNP_UDP_1"/>
    <property type="match status" value="1"/>
</dbReference>
<dbReference type="SUPFAM" id="SSF53167">
    <property type="entry name" value="Purine and uridine phosphorylases"/>
    <property type="match status" value="1"/>
</dbReference>
<protein>
    <recommendedName>
        <fullName evidence="1">5'-methylthioadenosine/S-adenosylhomocysteine nucleosidase</fullName>
        <shortName evidence="1">MTA/SAH nucleosidase</shortName>
        <shortName evidence="1">MTAN</shortName>
        <ecNumber evidence="1">3.2.2.9</ecNumber>
    </recommendedName>
    <alternativeName>
        <fullName evidence="1">5'-deoxyadenosine nucleosidase</fullName>
        <shortName evidence="1">DOA nucleosidase</shortName>
        <shortName evidence="1">dAdo nucleosidase</shortName>
    </alternativeName>
    <alternativeName>
        <fullName evidence="1">5'-methylthioadenosine nucleosidase</fullName>
        <shortName evidence="1">MTA nucleosidase</shortName>
    </alternativeName>
    <alternativeName>
        <fullName evidence="1">S-adenosylhomocysteine nucleosidase</fullName>
        <shortName evidence="1">AdoHcy nucleosidase</shortName>
        <shortName evidence="1">SAH nucleosidase</shortName>
        <shortName evidence="1">SRH nucleosidase</shortName>
    </alternativeName>
</protein>
<gene>
    <name evidence="1" type="primary">mtnN</name>
    <name type="ordered locus">SDY_0175</name>
</gene>
<name>MTNN_SHIDS</name>
<keyword id="KW-0028">Amino-acid biosynthesis</keyword>
<keyword id="KW-0378">Hydrolase</keyword>
<keyword id="KW-0486">Methionine biosynthesis</keyword>
<keyword id="KW-1185">Reference proteome</keyword>